<comment type="function">
    <text evidence="1">One of several proteins that assist in the late maturation steps of the functional core of the 30S ribosomal subunit. Associates with free 30S ribosomal subunits (but not with 30S subunits that are part of 70S ribosomes or polysomes). Required for efficient processing of 16S rRNA. May interact with the 5'-terminal helix region of 16S rRNA.</text>
</comment>
<comment type="subunit">
    <text evidence="1">Monomer. Binds 30S ribosomal subunits, but not 50S ribosomal subunits or 70S ribosomes.</text>
</comment>
<comment type="subcellular location">
    <subcellularLocation>
        <location evidence="1">Cytoplasm</location>
    </subcellularLocation>
</comment>
<comment type="similarity">
    <text evidence="1">Belongs to the RbfA family.</text>
</comment>
<gene>
    <name evidence="1" type="primary">rbfA</name>
    <name type="ordered locus">Athe_1052</name>
</gene>
<feature type="chain" id="PRO_1000193222" description="Ribosome-binding factor A">
    <location>
        <begin position="1"/>
        <end position="132"/>
    </location>
</feature>
<sequence length="132" mass="15542">MQFERSDRVSEEIKKELSDIIQHDLKDPRLCAELISIVKVNMSKDLRHAKVYVSIFDKDKEKVETTMKALENAKPYIRREISRRISLRFTPEITFELDDSIEYGARISQILNQLNIPKEDENIEESEGEEEN</sequence>
<dbReference type="EMBL" id="CP001393">
    <property type="protein sequence ID" value="ACM60153.1"/>
    <property type="molecule type" value="Genomic_DNA"/>
</dbReference>
<dbReference type="RefSeq" id="WP_015907565.1">
    <property type="nucleotide sequence ID" value="NC_012034.1"/>
</dbReference>
<dbReference type="SMR" id="B9MR49"/>
<dbReference type="STRING" id="521460.Athe_1052"/>
<dbReference type="GeneID" id="31772403"/>
<dbReference type="KEGG" id="ate:Athe_1052"/>
<dbReference type="eggNOG" id="COG0858">
    <property type="taxonomic scope" value="Bacteria"/>
</dbReference>
<dbReference type="HOGENOM" id="CLU_089475_6_3_9"/>
<dbReference type="Proteomes" id="UP000007723">
    <property type="component" value="Chromosome"/>
</dbReference>
<dbReference type="GO" id="GO:0005829">
    <property type="term" value="C:cytosol"/>
    <property type="evidence" value="ECO:0007669"/>
    <property type="project" value="TreeGrafter"/>
</dbReference>
<dbReference type="GO" id="GO:0043024">
    <property type="term" value="F:ribosomal small subunit binding"/>
    <property type="evidence" value="ECO:0007669"/>
    <property type="project" value="TreeGrafter"/>
</dbReference>
<dbReference type="GO" id="GO:0030490">
    <property type="term" value="P:maturation of SSU-rRNA"/>
    <property type="evidence" value="ECO:0007669"/>
    <property type="project" value="UniProtKB-UniRule"/>
</dbReference>
<dbReference type="Gene3D" id="3.30.300.20">
    <property type="match status" value="1"/>
</dbReference>
<dbReference type="HAMAP" id="MF_00003">
    <property type="entry name" value="RbfA"/>
    <property type="match status" value="1"/>
</dbReference>
<dbReference type="InterPro" id="IPR015946">
    <property type="entry name" value="KH_dom-like_a/b"/>
</dbReference>
<dbReference type="InterPro" id="IPR000238">
    <property type="entry name" value="RbfA"/>
</dbReference>
<dbReference type="InterPro" id="IPR023799">
    <property type="entry name" value="RbfA_dom_sf"/>
</dbReference>
<dbReference type="InterPro" id="IPR020053">
    <property type="entry name" value="Ribosome-bd_factorA_CS"/>
</dbReference>
<dbReference type="NCBIfam" id="TIGR00082">
    <property type="entry name" value="rbfA"/>
    <property type="match status" value="1"/>
</dbReference>
<dbReference type="PANTHER" id="PTHR33515">
    <property type="entry name" value="RIBOSOME-BINDING FACTOR A, CHLOROPLASTIC-RELATED"/>
    <property type="match status" value="1"/>
</dbReference>
<dbReference type="PANTHER" id="PTHR33515:SF1">
    <property type="entry name" value="RIBOSOME-BINDING FACTOR A, CHLOROPLASTIC-RELATED"/>
    <property type="match status" value="1"/>
</dbReference>
<dbReference type="Pfam" id="PF02033">
    <property type="entry name" value="RBFA"/>
    <property type="match status" value="1"/>
</dbReference>
<dbReference type="SUPFAM" id="SSF89919">
    <property type="entry name" value="Ribosome-binding factor A, RbfA"/>
    <property type="match status" value="1"/>
</dbReference>
<dbReference type="PROSITE" id="PS01319">
    <property type="entry name" value="RBFA"/>
    <property type="match status" value="1"/>
</dbReference>
<proteinExistence type="inferred from homology"/>
<reference key="1">
    <citation type="submission" date="2009-01" db="EMBL/GenBank/DDBJ databases">
        <title>Complete sequence of chromosome of Caldicellulosiruptor becscii DSM 6725.</title>
        <authorList>
            <person name="Lucas S."/>
            <person name="Copeland A."/>
            <person name="Lapidus A."/>
            <person name="Glavina del Rio T."/>
            <person name="Tice H."/>
            <person name="Bruce D."/>
            <person name="Goodwin L."/>
            <person name="Pitluck S."/>
            <person name="Sims D."/>
            <person name="Meincke L."/>
            <person name="Brettin T."/>
            <person name="Detter J.C."/>
            <person name="Han C."/>
            <person name="Larimer F."/>
            <person name="Land M."/>
            <person name="Hauser L."/>
            <person name="Kyrpides N."/>
            <person name="Ovchinnikova G."/>
            <person name="Kataeva I."/>
            <person name="Adams M.W.W."/>
        </authorList>
    </citation>
    <scope>NUCLEOTIDE SEQUENCE [LARGE SCALE GENOMIC DNA]</scope>
    <source>
        <strain>ATCC BAA-1888 / DSM 6725 / KCTC 15123 / Z-1320</strain>
    </source>
</reference>
<protein>
    <recommendedName>
        <fullName evidence="1">Ribosome-binding factor A</fullName>
    </recommendedName>
</protein>
<keyword id="KW-0963">Cytoplasm</keyword>
<keyword id="KW-0690">Ribosome biogenesis</keyword>
<evidence type="ECO:0000255" key="1">
    <source>
        <dbReference type="HAMAP-Rule" id="MF_00003"/>
    </source>
</evidence>
<organism>
    <name type="scientific">Caldicellulosiruptor bescii (strain ATCC BAA-1888 / DSM 6725 / KCTC 15123 / Z-1320)</name>
    <name type="common">Anaerocellum thermophilum</name>
    <dbReference type="NCBI Taxonomy" id="521460"/>
    <lineage>
        <taxon>Bacteria</taxon>
        <taxon>Bacillati</taxon>
        <taxon>Bacillota</taxon>
        <taxon>Bacillota incertae sedis</taxon>
        <taxon>Caldicellulosiruptorales</taxon>
        <taxon>Caldicellulosiruptoraceae</taxon>
        <taxon>Caldicellulosiruptor</taxon>
    </lineage>
</organism>
<name>RBFA_CALBD</name>
<accession>B9MR49</accession>